<keyword id="KW-0025">Alternative splicing</keyword>
<keyword id="KW-1003">Cell membrane</keyword>
<keyword id="KW-1015">Disulfide bond</keyword>
<keyword id="KW-0967">Endosome</keyword>
<keyword id="KW-0325">Glycoprotein</keyword>
<keyword id="KW-0391">Immunity</keyword>
<keyword id="KW-0393">Immunoglobulin domain</keyword>
<keyword id="KW-0472">Membrane</keyword>
<keyword id="KW-0675">Receptor</keyword>
<keyword id="KW-1185">Reference proteome</keyword>
<keyword id="KW-0732">Signal</keyword>
<keyword id="KW-0812">Transmembrane</keyword>
<keyword id="KW-1133">Transmembrane helix</keyword>
<name>CLM9_MOUSE</name>
<feature type="signal peptide" evidence="1">
    <location>
        <begin position="1"/>
        <end position="18"/>
    </location>
</feature>
<feature type="chain" id="PRO_0000306113" description="CMRF35-like molecule 9">
    <location>
        <begin position="19"/>
        <end position="331"/>
    </location>
</feature>
<feature type="topological domain" description="Extracellular" evidence="2">
    <location>
        <begin position="19"/>
        <end position="204"/>
    </location>
</feature>
<feature type="transmembrane region" description="Helical" evidence="2">
    <location>
        <begin position="205"/>
        <end position="225"/>
    </location>
</feature>
<feature type="topological domain" description="Cytoplasmic" evidence="2">
    <location>
        <begin position="226"/>
        <end position="331"/>
    </location>
</feature>
<feature type="domain" description="Ig-like V-type">
    <location>
        <begin position="19"/>
        <end position="120"/>
    </location>
</feature>
<feature type="region of interest" description="Disordered" evidence="4">
    <location>
        <begin position="278"/>
        <end position="318"/>
    </location>
</feature>
<feature type="compositionally biased region" description="Polar residues" evidence="4">
    <location>
        <begin position="278"/>
        <end position="293"/>
    </location>
</feature>
<feature type="glycosylation site" description="O-linked (GalNAc...) threonine" evidence="2">
    <location>
        <position position="136"/>
    </location>
</feature>
<feature type="glycosylation site" description="O-linked (GalNAc...) serine" evidence="2">
    <location>
        <position position="140"/>
    </location>
</feature>
<feature type="glycosylation site" description="O-linked (GalNAc...) threonine" evidence="2">
    <location>
        <position position="143"/>
    </location>
</feature>
<feature type="glycosylation site" description="O-linked (GalNAc...) serine" evidence="2">
    <location>
        <position position="145"/>
    </location>
</feature>
<feature type="glycosylation site" description="O-linked (GalNAc...) threonine" evidence="2">
    <location>
        <position position="150"/>
    </location>
</feature>
<feature type="glycosylation site" description="O-linked (GalNAc...) threonine" evidence="2">
    <location>
        <position position="152"/>
    </location>
</feature>
<feature type="glycosylation site" description="O-linked (GalNAc...) serine" evidence="2">
    <location>
        <position position="154"/>
    </location>
</feature>
<feature type="glycosylation site" description="O-linked (GalNAc...) threonine" evidence="2">
    <location>
        <position position="164"/>
    </location>
</feature>
<feature type="glycosylation site" description="O-linked (GalNAc...) threonine" evidence="2">
    <location>
        <position position="181"/>
    </location>
</feature>
<feature type="glycosylation site" description="O-linked (GalNAc...) threonine" evidence="2">
    <location>
        <position position="182"/>
    </location>
</feature>
<feature type="glycosylation site" description="O-linked (GalNAc...) serine" evidence="2">
    <location>
        <position position="186"/>
    </location>
</feature>
<feature type="disulfide bond" evidence="3">
    <location>
        <begin position="37"/>
        <end position="106"/>
    </location>
</feature>
<feature type="splice variant" id="VSP_028413" description="In isoform 2 and isoform 4." evidence="10 11 12">
    <original>GKRDNAVPAGTCCPSSPTPSFQPLTPTRSLQPKAKAWQTQLPEPR</original>
    <variation>ASPGLHPTVVTAKQGKTGVKAPVFTEVAPAWSTGTSQVPPGISPYAGSSPHTATPARSAGTSQVPPGISPYAGRSPHTATSPHAG</variation>
    <location>
        <begin position="126"/>
        <end position="170"/>
    </location>
</feature>
<feature type="splice variant" id="VSP_028414" description="In isoform 5." evidence="8 9 10 11 12">
    <location>
        <begin position="127"/>
        <end position="170"/>
    </location>
</feature>
<feature type="splice variant" id="VSP_028415" description="In isoform 3." evidence="11 12">
    <original>R</original>
    <variation>TSPGLHPTVVTAKQGKTGVKAPVFTEVAPAWSTGTSQVPPGISPYAGSSPHTATPARSAGTSQVPPGISPYAGRSPHTATSPHAG</variation>
    <location>
        <position position="170"/>
    </location>
</feature>
<feature type="splice variant" id="VSP_028416" description="In isoform 4." evidence="10">
    <original>S</original>
    <variation>R</variation>
    <location>
        <position position="197"/>
    </location>
</feature>
<feature type="splice variant" id="VSP_028417" description="In isoform 4." evidence="10">
    <location>
        <begin position="198"/>
        <end position="331"/>
    </location>
</feature>
<feature type="sequence conflict" description="In Ref. 2; BAE96049 and 3; BAB26251." evidence="13" ref="2 3">
    <original>S</original>
    <variation>Y</variation>
    <location>
        <position position="172"/>
    </location>
</feature>
<sequence>MRPLVLLWGCLVLPGYEALKGPKEISGFEGDTVSLRCTYVEKMKEHRKYWCRQGGILVSRCGDIVYANQDQEVTRGRMSIRDSPQELSMTVIMRDLTLKDSGKYWCGIDRLGRDESFEVTLIVFPGKRDNAVPAGTCCPSSPTPSFQPLTPTRSLQPKAKAWQTQLPEPRSSRPVVWLPLTTPQDSRAVASSVSKPSVSIPMVRMMAPVLILLSLLLAAGLIAFGSHMLRWRKKAWLATETQKNEKVYLETSLPGNGWTTEDSTIDLAVTPECLRNLNPSAVPSPETQNLSQSTEEEEAARSLDDDKEDVMAPPPLQMSAEELAFSEFISV</sequence>
<dbReference type="EMBL" id="AY457055">
    <property type="protein sequence ID" value="AAR27946.1"/>
    <property type="molecule type" value="mRNA"/>
</dbReference>
<dbReference type="EMBL" id="AB243063">
    <property type="protein sequence ID" value="BAE96046.1"/>
    <property type="molecule type" value="mRNA"/>
</dbReference>
<dbReference type="EMBL" id="AB243064">
    <property type="protein sequence ID" value="BAE96047.1"/>
    <property type="molecule type" value="mRNA"/>
</dbReference>
<dbReference type="EMBL" id="AB243065">
    <property type="protein sequence ID" value="BAE96048.1"/>
    <property type="molecule type" value="mRNA"/>
</dbReference>
<dbReference type="EMBL" id="AB243066">
    <property type="protein sequence ID" value="BAE96049.1"/>
    <property type="molecule type" value="mRNA"/>
</dbReference>
<dbReference type="EMBL" id="AK009375">
    <property type="protein sequence ID" value="BAB26251.1"/>
    <property type="molecule type" value="mRNA"/>
</dbReference>
<dbReference type="EMBL" id="AK138920">
    <property type="protein sequence ID" value="BAE23817.1"/>
    <property type="molecule type" value="mRNA"/>
</dbReference>
<dbReference type="EMBL" id="AK171982">
    <property type="protein sequence ID" value="BAE42759.1"/>
    <property type="molecule type" value="mRNA"/>
</dbReference>
<dbReference type="EMBL" id="AL591145">
    <property type="protein sequence ID" value="CAM23248.1"/>
    <property type="status" value="ALT_SEQ"/>
    <property type="molecule type" value="Genomic_DNA"/>
</dbReference>
<dbReference type="EMBL" id="AL591145">
    <property type="protein sequence ID" value="CAM23249.1"/>
    <property type="molecule type" value="Genomic_DNA"/>
</dbReference>
<dbReference type="EMBL" id="AL591145">
    <property type="protein sequence ID" value="CAM23250.1"/>
    <property type="molecule type" value="Genomic_DNA"/>
</dbReference>
<dbReference type="EMBL" id="AL591145">
    <property type="protein sequence ID" value="CAM23251.1"/>
    <property type="molecule type" value="Genomic_DNA"/>
</dbReference>
<dbReference type="EMBL" id="BC116906">
    <property type="protein sequence ID" value="AAI16907.1"/>
    <property type="molecule type" value="mRNA"/>
</dbReference>
<dbReference type="EMBL" id="BC119315">
    <property type="protein sequence ID" value="AAI19316.1"/>
    <property type="molecule type" value="mRNA"/>
</dbReference>
<dbReference type="CCDS" id="CCDS25484.1">
    <molecule id="Q1ERP8-5"/>
</dbReference>
<dbReference type="CCDS" id="CCDS48939.1">
    <molecule id="Q1ERP8-3"/>
</dbReference>
<dbReference type="CCDS" id="CCDS48940.1">
    <molecule id="Q1ERP8-2"/>
</dbReference>
<dbReference type="RefSeq" id="NP_001154183.1">
    <molecule id="Q1ERP8-3"/>
    <property type="nucleotide sequence ID" value="NM_001160711.2"/>
</dbReference>
<dbReference type="RefSeq" id="NP_001154184.1">
    <molecule id="Q1ERP8-1"/>
    <property type="nucleotide sequence ID" value="NM_001160712.2"/>
</dbReference>
<dbReference type="RefSeq" id="NP_001154185.1">
    <molecule id="Q1ERP8-2"/>
    <property type="nucleotide sequence ID" value="NM_001160713.2"/>
</dbReference>
<dbReference type="RefSeq" id="NP_082263.2">
    <molecule id="Q1ERP8-5"/>
    <property type="nucleotide sequence ID" value="NM_027987.4"/>
</dbReference>
<dbReference type="SMR" id="Q1ERP8"/>
<dbReference type="FunCoup" id="Q1ERP8">
    <property type="interactions" value="885"/>
</dbReference>
<dbReference type="STRING" id="10090.ENSMUSP00000102782"/>
<dbReference type="GlyCosmos" id="Q1ERP8">
    <property type="glycosylation" value="11 sites, No reported glycans"/>
</dbReference>
<dbReference type="GlyGen" id="Q1ERP8">
    <property type="glycosylation" value="11 sites"/>
</dbReference>
<dbReference type="iPTMnet" id="Q1ERP8"/>
<dbReference type="PhosphoSitePlus" id="Q1ERP8"/>
<dbReference type="CPTAC" id="non-CPTAC-3349"/>
<dbReference type="PeptideAtlas" id="Q1ERP8"/>
<dbReference type="ProteomicsDB" id="283308">
    <molecule id="Q1ERP8-1"/>
</dbReference>
<dbReference type="ProteomicsDB" id="283309">
    <molecule id="Q1ERP8-2"/>
</dbReference>
<dbReference type="ProteomicsDB" id="283310">
    <molecule id="Q1ERP8-3"/>
</dbReference>
<dbReference type="ProteomicsDB" id="283311">
    <molecule id="Q1ERP8-4"/>
</dbReference>
<dbReference type="ProteomicsDB" id="283312">
    <molecule id="Q1ERP8-5"/>
</dbReference>
<dbReference type="ABCD" id="Q1ERP8">
    <property type="antibodies" value="22 sequenced antibodies"/>
</dbReference>
<dbReference type="Antibodypedia" id="1022">
    <property type="antibodies" value="117 antibodies from 20 providers"/>
</dbReference>
<dbReference type="DNASU" id="52685"/>
<dbReference type="Ensembl" id="ENSMUST00000017453.12">
    <molecule id="Q1ERP8-5"/>
    <property type="protein sequence ID" value="ENSMUSP00000017453.6"/>
    <property type="gene ID" value="ENSMUSG00000017309.12"/>
</dbReference>
<dbReference type="Ensembl" id="ENSMUST00000107163.9">
    <molecule id="Q1ERP8-2"/>
    <property type="protein sequence ID" value="ENSMUSP00000102781.3"/>
    <property type="gene ID" value="ENSMUSG00000017309.12"/>
</dbReference>
<dbReference type="Ensembl" id="ENSMUST00000107164.3">
    <molecule id="Q1ERP8-3"/>
    <property type="protein sequence ID" value="ENSMUSP00000102782.3"/>
    <property type="gene ID" value="ENSMUSG00000017309.12"/>
</dbReference>
<dbReference type="GeneID" id="52685"/>
<dbReference type="KEGG" id="mmu:52685"/>
<dbReference type="UCSC" id="uc007lqf.2">
    <molecule id="Q1ERP8-4"/>
    <property type="organism name" value="mouse"/>
</dbReference>
<dbReference type="UCSC" id="uc007lqg.2">
    <molecule id="Q1ERP8-5"/>
    <property type="organism name" value="mouse"/>
</dbReference>
<dbReference type="UCSC" id="uc007lqh.2">
    <molecule id="Q1ERP8-1"/>
    <property type="organism name" value="mouse"/>
</dbReference>
<dbReference type="UCSC" id="uc007lqi.2">
    <molecule id="Q1ERP8-3"/>
    <property type="organism name" value="mouse"/>
</dbReference>
<dbReference type="UCSC" id="uc007lqj.2">
    <molecule id="Q1ERP8-2"/>
    <property type="organism name" value="mouse"/>
</dbReference>
<dbReference type="AGR" id="MGI:1289168"/>
<dbReference type="CTD" id="146894"/>
<dbReference type="MGI" id="MGI:1289168">
    <property type="gene designation" value="Cd300lg"/>
</dbReference>
<dbReference type="VEuPathDB" id="HostDB:ENSMUSG00000017309"/>
<dbReference type="eggNOG" id="ENOG502SURU">
    <property type="taxonomic scope" value="Eukaryota"/>
</dbReference>
<dbReference type="GeneTree" id="ENSGT00940000162429"/>
<dbReference type="InParanoid" id="Q1ERP8"/>
<dbReference type="OMA" id="ERKKYWC"/>
<dbReference type="OrthoDB" id="92412at9989"/>
<dbReference type="PhylomeDB" id="Q1ERP8"/>
<dbReference type="TreeFam" id="TF334441"/>
<dbReference type="Reactome" id="R-MMU-198933">
    <property type="pathway name" value="Immunoregulatory interactions between a Lymphoid and a non-Lymphoid cell"/>
</dbReference>
<dbReference type="BioGRID-ORCS" id="52685">
    <property type="hits" value="5 hits in 77 CRISPR screens"/>
</dbReference>
<dbReference type="PRO" id="PR:Q1ERP8"/>
<dbReference type="Proteomes" id="UP000000589">
    <property type="component" value="Chromosome 11"/>
</dbReference>
<dbReference type="RNAct" id="Q1ERP8">
    <property type="molecule type" value="protein"/>
</dbReference>
<dbReference type="Bgee" id="ENSMUSG00000017309">
    <property type="expression patterns" value="Expressed in interventricular septum and 70 other cell types or tissues"/>
</dbReference>
<dbReference type="ExpressionAtlas" id="Q1ERP8">
    <property type="expression patterns" value="baseline and differential"/>
</dbReference>
<dbReference type="GO" id="GO:0016324">
    <property type="term" value="C:apical plasma membrane"/>
    <property type="evidence" value="ECO:0000314"/>
    <property type="project" value="MGI"/>
</dbReference>
<dbReference type="GO" id="GO:0016323">
    <property type="term" value="C:basolateral plasma membrane"/>
    <property type="evidence" value="ECO:0000314"/>
    <property type="project" value="MGI"/>
</dbReference>
<dbReference type="GO" id="GO:0032585">
    <property type="term" value="C:multivesicular body membrane"/>
    <property type="evidence" value="ECO:0007669"/>
    <property type="project" value="UniProtKB-SubCell"/>
</dbReference>
<dbReference type="GO" id="GO:0001791">
    <property type="term" value="F:IgM binding"/>
    <property type="evidence" value="ECO:0000314"/>
    <property type="project" value="MGI"/>
</dbReference>
<dbReference type="GO" id="GO:0002376">
    <property type="term" value="P:immune system process"/>
    <property type="evidence" value="ECO:0007669"/>
    <property type="project" value="UniProtKB-KW"/>
</dbReference>
<dbReference type="GO" id="GO:0002414">
    <property type="term" value="P:immunoglobulin transcytosis in epithelial cells"/>
    <property type="evidence" value="ECO:0000314"/>
    <property type="project" value="MGI"/>
</dbReference>
<dbReference type="CDD" id="cd05716">
    <property type="entry name" value="IgV_pIgR_like"/>
    <property type="match status" value="1"/>
</dbReference>
<dbReference type="FunFam" id="2.60.40.10:FF:000370">
    <property type="entry name" value="CMRF35-like molecule 1"/>
    <property type="match status" value="1"/>
</dbReference>
<dbReference type="Gene3D" id="2.60.40.10">
    <property type="entry name" value="Immunoglobulins"/>
    <property type="match status" value="1"/>
</dbReference>
<dbReference type="InterPro" id="IPR050671">
    <property type="entry name" value="CD300_family_receptors"/>
</dbReference>
<dbReference type="InterPro" id="IPR007110">
    <property type="entry name" value="Ig-like_dom"/>
</dbReference>
<dbReference type="InterPro" id="IPR036179">
    <property type="entry name" value="Ig-like_dom_sf"/>
</dbReference>
<dbReference type="InterPro" id="IPR013783">
    <property type="entry name" value="Ig-like_fold"/>
</dbReference>
<dbReference type="InterPro" id="IPR003599">
    <property type="entry name" value="Ig_sub"/>
</dbReference>
<dbReference type="InterPro" id="IPR013106">
    <property type="entry name" value="Ig_V-set"/>
</dbReference>
<dbReference type="PANTHER" id="PTHR11860:SF62">
    <property type="entry name" value="CMRF35-LIKE MOLECULE 9"/>
    <property type="match status" value="1"/>
</dbReference>
<dbReference type="PANTHER" id="PTHR11860">
    <property type="entry name" value="POLYMERIC-IMMUNOGLOBULIN RECEPTOR"/>
    <property type="match status" value="1"/>
</dbReference>
<dbReference type="Pfam" id="PF07686">
    <property type="entry name" value="V-set"/>
    <property type="match status" value="1"/>
</dbReference>
<dbReference type="SMART" id="SM00409">
    <property type="entry name" value="IG"/>
    <property type="match status" value="1"/>
</dbReference>
<dbReference type="SUPFAM" id="SSF48726">
    <property type="entry name" value="Immunoglobulin"/>
    <property type="match status" value="1"/>
</dbReference>
<dbReference type="PROSITE" id="PS50835">
    <property type="entry name" value="IG_LIKE"/>
    <property type="match status" value="1"/>
</dbReference>
<gene>
    <name type="primary">Cd300lg</name>
    <name type="synonym">Clm9</name>
    <name type="synonym">D11Ertd736e</name>
</gene>
<accession>Q1ERP8</accession>
<accession>A2A503</accession>
<accession>Q1ERP9</accession>
<accession>Q1ERQ0</accession>
<accession>Q3UU12</accession>
<accession>Q6SJP9</accession>
<accession>Q9D7B8</accession>
<reference key="1">
    <citation type="journal article" date="2003" name="J. Immunol.">
        <title>CMRF-35-like molecule-1, a novel mouse myeloid receptor, can inhibit osteoclast formation.</title>
        <authorList>
            <person name="Chung D.-H."/>
            <person name="Humphrey M.B."/>
            <person name="Nakamura M.C."/>
            <person name="Ginzinger D.G."/>
            <person name="Seaman W.E."/>
            <person name="Daws M.R."/>
        </authorList>
    </citation>
    <scope>NUCLEOTIDE SEQUENCE [MRNA] (ISOFORM 5)</scope>
    <scope>TISSUE SPECIFICITY</scope>
    <source>
        <strain>C57BL/6J</strain>
    </source>
</reference>
<reference key="2">
    <citation type="journal article" date="2006" name="J. Exp. Med.">
        <title>Nepmucin, a novel HEV sialomucin, mediates L-selectin-dependent lymphocyte rolling and promotes lymphocyte adhesion under flow.</title>
        <authorList>
            <person name="Umemoto E."/>
            <person name="Tanaka T."/>
            <person name="Kanda H."/>
            <person name="Jin S."/>
            <person name="Tohya K."/>
            <person name="Otani K."/>
            <person name="Matsutani T."/>
            <person name="Matsumoto M."/>
            <person name="Ebisuno Y."/>
            <person name="Jang M.H."/>
            <person name="Fukuda M."/>
            <person name="Hirata T."/>
            <person name="Miyasaka M."/>
        </authorList>
    </citation>
    <scope>NUCLEOTIDE SEQUENCE [MRNA] (ISOFORMS 1; 2; 3 AND 5)</scope>
    <scope>FUNCTION</scope>
    <scope>SUBCELLULAR LOCATION</scope>
    <scope>TISSUE SPECIFICITY</scope>
    <scope>GLYCOSYLATION</scope>
    <source>
        <strain>C57BL/6J</strain>
        <tissue>Lymph node</tissue>
    </source>
</reference>
<reference key="3">
    <citation type="journal article" date="2006" name="Biochem. Biophys. Res. Commun.">
        <title>CD300 antigen like family member G: a novel Ig receptor like protein exclusively expressed on capillary endothelium.</title>
        <authorList>
            <person name="Takatsu H."/>
            <person name="Hase K."/>
            <person name="Ohmae M."/>
            <person name="Ohshima S."/>
            <person name="Hashimoto K."/>
            <person name="Taniura N."/>
            <person name="Yamamoto A."/>
            <person name="Ohno H."/>
        </authorList>
    </citation>
    <scope>NUCLEOTIDE SEQUENCE [MRNA] (ISOFORMS 1; 2; 3 AND 5)</scope>
    <scope>FUNCTION</scope>
    <scope>SUBCELLULAR LOCATION</scope>
    <scope>TISSUE SPECIFICITY</scope>
    <source>
        <strain>C57BL/6J</strain>
        <tissue>Heart</tissue>
    </source>
</reference>
<reference key="4">
    <citation type="journal article" date="2005" name="Science">
        <title>The transcriptional landscape of the mammalian genome.</title>
        <authorList>
            <person name="Carninci P."/>
            <person name="Kasukawa T."/>
            <person name="Katayama S."/>
            <person name="Gough J."/>
            <person name="Frith M.C."/>
            <person name="Maeda N."/>
            <person name="Oyama R."/>
            <person name="Ravasi T."/>
            <person name="Lenhard B."/>
            <person name="Wells C."/>
            <person name="Kodzius R."/>
            <person name="Shimokawa K."/>
            <person name="Bajic V.B."/>
            <person name="Brenner S.E."/>
            <person name="Batalov S."/>
            <person name="Forrest A.R."/>
            <person name="Zavolan M."/>
            <person name="Davis M.J."/>
            <person name="Wilming L.G."/>
            <person name="Aidinis V."/>
            <person name="Allen J.E."/>
            <person name="Ambesi-Impiombato A."/>
            <person name="Apweiler R."/>
            <person name="Aturaliya R.N."/>
            <person name="Bailey T.L."/>
            <person name="Bansal M."/>
            <person name="Baxter L."/>
            <person name="Beisel K.W."/>
            <person name="Bersano T."/>
            <person name="Bono H."/>
            <person name="Chalk A.M."/>
            <person name="Chiu K.P."/>
            <person name="Choudhary V."/>
            <person name="Christoffels A."/>
            <person name="Clutterbuck D.R."/>
            <person name="Crowe M.L."/>
            <person name="Dalla E."/>
            <person name="Dalrymple B.P."/>
            <person name="de Bono B."/>
            <person name="Della Gatta G."/>
            <person name="di Bernardo D."/>
            <person name="Down T."/>
            <person name="Engstrom P."/>
            <person name="Fagiolini M."/>
            <person name="Faulkner G."/>
            <person name="Fletcher C.F."/>
            <person name="Fukushima T."/>
            <person name="Furuno M."/>
            <person name="Futaki S."/>
            <person name="Gariboldi M."/>
            <person name="Georgii-Hemming P."/>
            <person name="Gingeras T.R."/>
            <person name="Gojobori T."/>
            <person name="Green R.E."/>
            <person name="Gustincich S."/>
            <person name="Harbers M."/>
            <person name="Hayashi Y."/>
            <person name="Hensch T.K."/>
            <person name="Hirokawa N."/>
            <person name="Hill D."/>
            <person name="Huminiecki L."/>
            <person name="Iacono M."/>
            <person name="Ikeo K."/>
            <person name="Iwama A."/>
            <person name="Ishikawa T."/>
            <person name="Jakt M."/>
            <person name="Kanapin A."/>
            <person name="Katoh M."/>
            <person name="Kawasawa Y."/>
            <person name="Kelso J."/>
            <person name="Kitamura H."/>
            <person name="Kitano H."/>
            <person name="Kollias G."/>
            <person name="Krishnan S.P."/>
            <person name="Kruger A."/>
            <person name="Kummerfeld S.K."/>
            <person name="Kurochkin I.V."/>
            <person name="Lareau L.F."/>
            <person name="Lazarevic D."/>
            <person name="Lipovich L."/>
            <person name="Liu J."/>
            <person name="Liuni S."/>
            <person name="McWilliam S."/>
            <person name="Madan Babu M."/>
            <person name="Madera M."/>
            <person name="Marchionni L."/>
            <person name="Matsuda H."/>
            <person name="Matsuzawa S."/>
            <person name="Miki H."/>
            <person name="Mignone F."/>
            <person name="Miyake S."/>
            <person name="Morris K."/>
            <person name="Mottagui-Tabar S."/>
            <person name="Mulder N."/>
            <person name="Nakano N."/>
            <person name="Nakauchi H."/>
            <person name="Ng P."/>
            <person name="Nilsson R."/>
            <person name="Nishiguchi S."/>
            <person name="Nishikawa S."/>
            <person name="Nori F."/>
            <person name="Ohara O."/>
            <person name="Okazaki Y."/>
            <person name="Orlando V."/>
            <person name="Pang K.C."/>
            <person name="Pavan W.J."/>
            <person name="Pavesi G."/>
            <person name="Pesole G."/>
            <person name="Petrovsky N."/>
            <person name="Piazza S."/>
            <person name="Reed J."/>
            <person name="Reid J.F."/>
            <person name="Ring B.Z."/>
            <person name="Ringwald M."/>
            <person name="Rost B."/>
            <person name="Ruan Y."/>
            <person name="Salzberg S.L."/>
            <person name="Sandelin A."/>
            <person name="Schneider C."/>
            <person name="Schoenbach C."/>
            <person name="Sekiguchi K."/>
            <person name="Semple C.A."/>
            <person name="Seno S."/>
            <person name="Sessa L."/>
            <person name="Sheng Y."/>
            <person name="Shibata Y."/>
            <person name="Shimada H."/>
            <person name="Shimada K."/>
            <person name="Silva D."/>
            <person name="Sinclair B."/>
            <person name="Sperling S."/>
            <person name="Stupka E."/>
            <person name="Sugiura K."/>
            <person name="Sultana R."/>
            <person name="Takenaka Y."/>
            <person name="Taki K."/>
            <person name="Tammoja K."/>
            <person name="Tan S.L."/>
            <person name="Tang S."/>
            <person name="Taylor M.S."/>
            <person name="Tegner J."/>
            <person name="Teichmann S.A."/>
            <person name="Ueda H.R."/>
            <person name="van Nimwegen E."/>
            <person name="Verardo R."/>
            <person name="Wei C.L."/>
            <person name="Yagi K."/>
            <person name="Yamanishi H."/>
            <person name="Zabarovsky E."/>
            <person name="Zhu S."/>
            <person name="Zimmer A."/>
            <person name="Hide W."/>
            <person name="Bult C."/>
            <person name="Grimmond S.M."/>
            <person name="Teasdale R.D."/>
            <person name="Liu E.T."/>
            <person name="Brusic V."/>
            <person name="Quackenbush J."/>
            <person name="Wahlestedt C."/>
            <person name="Mattick J.S."/>
            <person name="Hume D.A."/>
            <person name="Kai C."/>
            <person name="Sasaki D."/>
            <person name="Tomaru Y."/>
            <person name="Fukuda S."/>
            <person name="Kanamori-Katayama M."/>
            <person name="Suzuki M."/>
            <person name="Aoki J."/>
            <person name="Arakawa T."/>
            <person name="Iida J."/>
            <person name="Imamura K."/>
            <person name="Itoh M."/>
            <person name="Kato T."/>
            <person name="Kawaji H."/>
            <person name="Kawagashira N."/>
            <person name="Kawashima T."/>
            <person name="Kojima M."/>
            <person name="Kondo S."/>
            <person name="Konno H."/>
            <person name="Nakano K."/>
            <person name="Ninomiya N."/>
            <person name="Nishio T."/>
            <person name="Okada M."/>
            <person name="Plessy C."/>
            <person name="Shibata K."/>
            <person name="Shiraki T."/>
            <person name="Suzuki S."/>
            <person name="Tagami M."/>
            <person name="Waki K."/>
            <person name="Watahiki A."/>
            <person name="Okamura-Oho Y."/>
            <person name="Suzuki H."/>
            <person name="Kawai J."/>
            <person name="Hayashizaki Y."/>
        </authorList>
    </citation>
    <scope>NUCLEOTIDE SEQUENCE [LARGE SCALE MRNA] (ISOFORMS 4 AND 5)</scope>
    <source>
        <strain>C57BL/6J</strain>
        <tissue>Aorta</tissue>
        <tissue>Tongue</tissue>
        <tissue>Vein</tissue>
    </source>
</reference>
<reference key="5">
    <citation type="journal article" date="2009" name="PLoS Biol.">
        <title>Lineage-specific biology revealed by a finished genome assembly of the mouse.</title>
        <authorList>
            <person name="Church D.M."/>
            <person name="Goodstadt L."/>
            <person name="Hillier L.W."/>
            <person name="Zody M.C."/>
            <person name="Goldstein S."/>
            <person name="She X."/>
            <person name="Bult C.J."/>
            <person name="Agarwala R."/>
            <person name="Cherry J.L."/>
            <person name="DiCuccio M."/>
            <person name="Hlavina W."/>
            <person name="Kapustin Y."/>
            <person name="Meric P."/>
            <person name="Maglott D."/>
            <person name="Birtle Z."/>
            <person name="Marques A.C."/>
            <person name="Graves T."/>
            <person name="Zhou S."/>
            <person name="Teague B."/>
            <person name="Potamousis K."/>
            <person name="Churas C."/>
            <person name="Place M."/>
            <person name="Herschleb J."/>
            <person name="Runnheim R."/>
            <person name="Forrest D."/>
            <person name="Amos-Landgraf J."/>
            <person name="Schwartz D.C."/>
            <person name="Cheng Z."/>
            <person name="Lindblad-Toh K."/>
            <person name="Eichler E.E."/>
            <person name="Ponting C.P."/>
        </authorList>
    </citation>
    <scope>NUCLEOTIDE SEQUENCE [LARGE SCALE GENOMIC DNA]</scope>
    <source>
        <strain>C57BL/6J</strain>
    </source>
</reference>
<reference key="6">
    <citation type="journal article" date="2004" name="Genome Res.">
        <title>The status, quality, and expansion of the NIH full-length cDNA project: the Mammalian Gene Collection (MGC).</title>
        <authorList>
            <consortium name="The MGC Project Team"/>
        </authorList>
    </citation>
    <scope>NUCLEOTIDE SEQUENCE [LARGE SCALE MRNA] (ISOFORM 5)</scope>
    <source>
        <tissue>Brain</tissue>
    </source>
</reference>
<reference key="7">
    <citation type="journal article" date="2010" name="Cell">
        <title>A tissue-specific atlas of mouse protein phosphorylation and expression.</title>
        <authorList>
            <person name="Huttlin E.L."/>
            <person name="Jedrychowski M.P."/>
            <person name="Elias J.E."/>
            <person name="Goswami T."/>
            <person name="Rad R."/>
            <person name="Beausoleil S.A."/>
            <person name="Villen J."/>
            <person name="Haas W."/>
            <person name="Sowa M.E."/>
            <person name="Gygi S.P."/>
        </authorList>
    </citation>
    <scope>IDENTIFICATION BY MASS SPECTROMETRY [LARGE SCALE ANALYSIS]</scope>
    <source>
        <tissue>Brown adipose tissue</tissue>
        <tissue>Heart</tissue>
        <tissue>Liver</tissue>
    </source>
</reference>
<organism>
    <name type="scientific">Mus musculus</name>
    <name type="common">Mouse</name>
    <dbReference type="NCBI Taxonomy" id="10090"/>
    <lineage>
        <taxon>Eukaryota</taxon>
        <taxon>Metazoa</taxon>
        <taxon>Chordata</taxon>
        <taxon>Craniata</taxon>
        <taxon>Vertebrata</taxon>
        <taxon>Euteleostomi</taxon>
        <taxon>Mammalia</taxon>
        <taxon>Eutheria</taxon>
        <taxon>Euarchontoglires</taxon>
        <taxon>Glires</taxon>
        <taxon>Rodentia</taxon>
        <taxon>Myomorpha</taxon>
        <taxon>Muroidea</taxon>
        <taxon>Muridae</taxon>
        <taxon>Murinae</taxon>
        <taxon>Mus</taxon>
        <taxon>Mus</taxon>
    </lineage>
</organism>
<protein>
    <recommendedName>
        <fullName>CMRF35-like molecule 9</fullName>
        <shortName>CLM-9</shortName>
    </recommendedName>
    <alternativeName>
        <fullName>CD300 antigen-like family member G</fullName>
    </alternativeName>
    <alternativeName>
        <fullName>Nepmucin</fullName>
    </alternativeName>
    <cdAntigenName>CD300g</cdAntigenName>
</protein>
<proteinExistence type="evidence at protein level"/>
<evidence type="ECO:0000250" key="1"/>
<evidence type="ECO:0000255" key="2"/>
<evidence type="ECO:0000255" key="3">
    <source>
        <dbReference type="PROSITE-ProRule" id="PRU00114"/>
    </source>
</evidence>
<evidence type="ECO:0000256" key="4">
    <source>
        <dbReference type="SAM" id="MobiDB-lite"/>
    </source>
</evidence>
<evidence type="ECO:0000269" key="5">
    <source>
    </source>
</evidence>
<evidence type="ECO:0000269" key="6">
    <source>
    </source>
</evidence>
<evidence type="ECO:0000269" key="7">
    <source>
    </source>
</evidence>
<evidence type="ECO:0000303" key="8">
    <source>
    </source>
</evidence>
<evidence type="ECO:0000303" key="9">
    <source>
    </source>
</evidence>
<evidence type="ECO:0000303" key="10">
    <source>
    </source>
</evidence>
<evidence type="ECO:0000303" key="11">
    <source>
    </source>
</evidence>
<evidence type="ECO:0000303" key="12">
    <source>
    </source>
</evidence>
<evidence type="ECO:0000305" key="13"/>
<evidence type="ECO:0000305" key="14">
    <source>
    </source>
</evidence>
<comment type="function">
    <text evidence="6 7">Receptor which may mediate L-selectin-dependent lymphocyte rollings. Binds SELL in a calcium dependent manner. Binds lymphocyte.</text>
</comment>
<comment type="subcellular location">
    <subcellularLocation>
        <location evidence="6 7">Apical cell membrane</location>
        <topology evidence="14">Single-pass type I membrane protein</topology>
    </subcellularLocation>
    <subcellularLocation>
        <location evidence="6 7">Basolateral cell membrane</location>
        <topology evidence="14">Single-pass type I membrane protein</topology>
    </subcellularLocation>
    <subcellularLocation>
        <location evidence="7">Endosome</location>
        <location evidence="7">Multivesicular body membrane</location>
        <topology evidence="14">Single-pass type I membrane protein</topology>
    </subcellularLocation>
    <text evidence="7">Exclusively localized on capillary endothelium. Transcytoses across the cytoplasm in the capillary endothelium.</text>
</comment>
<comment type="alternative products">
    <event type="alternative splicing"/>
    <isoform>
        <id>Q1ERP8-1</id>
        <name>1</name>
        <name>isoform C</name>
        <name>CD300LG-beta</name>
        <sequence type="displayed"/>
    </isoform>
    <isoform>
        <id>Q1ERP8-2</id>
        <name>2</name>
        <name>isoform B</name>
        <name>CD300LG-gamma</name>
        <sequence type="described" ref="VSP_028413"/>
    </isoform>
    <isoform>
        <id>Q1ERP8-3</id>
        <name>3</name>
        <name>isoform A</name>
        <name>CD300LG-delta</name>
        <sequence type="described" ref="VSP_028415"/>
    </isoform>
    <isoform>
        <id>Q1ERP8-4</id>
        <name>4</name>
        <sequence type="described" ref="VSP_028413 VSP_028416 VSP_028417"/>
    </isoform>
    <isoform>
        <id>Q1ERP8-5</id>
        <name>5</name>
        <name>isoform D</name>
        <name>CD300LG-alpha</name>
        <sequence type="described" ref="VSP_028414"/>
    </isoform>
</comment>
<comment type="tissue specificity">
    <text evidence="5 6 7">Expressed in monocyte cell lines. Expressed in certain types of endothelial and myeloid lineage cells. Expressed in mesenteric lymph nodes (LNs), spleen, thymus, lung, heart and kidney. Expressed in high endothelial venules (HEVs) in peripheral and mesenteric LNs (at protein level). Highly expressed in heart. Slightly expressed in spleen and thymus. Isoform 5 is expressed preferentially in heart. Isoform 1 is expressed predominantly in kidney and liver.</text>
</comment>
<comment type="domain">
    <text>Ig-like V-type domain mediates binding to lymphocyte.</text>
</comment>
<comment type="PTM">
    <text evidence="6">O-glycosylated with sialylated oligosaccharides.</text>
</comment>
<comment type="similarity">
    <text evidence="13">Belongs to the CD300 family.</text>
</comment>
<comment type="sequence caution" evidence="13">
    <conflict type="erroneous gene model prediction">
        <sequence resource="EMBL-CDS" id="CAM23248"/>
    </conflict>
</comment>